<sequence length="309" mass="33400">MILTVTMNPSIDISYPLDELKIDTVNRVVDVTKTAGGKGLNVTRVLSEFGDSVLATGLVGGNLGEFLVEHIDNQVKKDFFSIQGETRNCIAILHGDNQTEVLEKGPEVLEQEGQDFLEHFKKLLESVEVVAISGSLPAGLPVDYYASLVELANQAGKPVVLDCSGAALQAVLESPHKPTVIKPNNEELSQLLGREVSEDLDELKEVLQEPLFAGIEWIIVSLGANGTFAKHGDTFYKVDIPRIQVVNPVGSGDSTVAGISSGLLHKESDAELLIKANVLGMLNAQEKMTGHVNMANYQVLYDQLIVKEV</sequence>
<gene>
    <name evidence="1" type="primary">lacC</name>
    <name type="ordered locus">SPT_1035</name>
</gene>
<comment type="catalytic activity">
    <reaction evidence="1">
        <text>D-tagatofuranose 6-phosphate + ATP = D-tagatofuranose 1,6-bisphosphate + ADP + H(+)</text>
        <dbReference type="Rhea" id="RHEA:12420"/>
        <dbReference type="ChEBI" id="CHEBI:15378"/>
        <dbReference type="ChEBI" id="CHEBI:30616"/>
        <dbReference type="ChEBI" id="CHEBI:58694"/>
        <dbReference type="ChEBI" id="CHEBI:58695"/>
        <dbReference type="ChEBI" id="CHEBI:456216"/>
        <dbReference type="EC" id="2.7.1.144"/>
    </reaction>
</comment>
<comment type="pathway">
    <text evidence="1">Carbohydrate metabolism; D-tagatose 6-phosphate degradation; D-glyceraldehyde 3-phosphate and glycerone phosphate from D-tagatose 6-phosphate: step 1/2.</text>
</comment>
<comment type="similarity">
    <text evidence="1">Belongs to the carbohydrate kinase PfkB family. LacC subfamily.</text>
</comment>
<proteinExistence type="inferred from homology"/>
<organism>
    <name type="scientific">Streptococcus pneumoniae (strain Taiwan19F-14)</name>
    <dbReference type="NCBI Taxonomy" id="487213"/>
    <lineage>
        <taxon>Bacteria</taxon>
        <taxon>Bacillati</taxon>
        <taxon>Bacillota</taxon>
        <taxon>Bacilli</taxon>
        <taxon>Lactobacillales</taxon>
        <taxon>Streptococcaceae</taxon>
        <taxon>Streptococcus</taxon>
    </lineage>
</organism>
<reference key="1">
    <citation type="journal article" date="2010" name="Genome Biol.">
        <title>Structure and dynamics of the pan-genome of Streptococcus pneumoniae and closely related species.</title>
        <authorList>
            <person name="Donati C."/>
            <person name="Hiller N.L."/>
            <person name="Tettelin H."/>
            <person name="Muzzi A."/>
            <person name="Croucher N.J."/>
            <person name="Angiuoli S.V."/>
            <person name="Oggioni M."/>
            <person name="Dunning Hotopp J.C."/>
            <person name="Hu F.Z."/>
            <person name="Riley D.R."/>
            <person name="Covacci A."/>
            <person name="Mitchell T.J."/>
            <person name="Bentley S.D."/>
            <person name="Kilian M."/>
            <person name="Ehrlich G.D."/>
            <person name="Rappuoli R."/>
            <person name="Moxon E.R."/>
            <person name="Masignani V."/>
        </authorList>
    </citation>
    <scope>NUCLEOTIDE SEQUENCE [LARGE SCALE GENOMIC DNA]</scope>
    <source>
        <strain>Taiwan19F-14</strain>
    </source>
</reference>
<keyword id="KW-0067">ATP-binding</keyword>
<keyword id="KW-0418">Kinase</keyword>
<keyword id="KW-0423">Lactose metabolism</keyword>
<keyword id="KW-0547">Nucleotide-binding</keyword>
<keyword id="KW-0808">Transferase</keyword>
<accession>C1CRA6</accession>
<feature type="chain" id="PRO_1000185413" description="Tagatose-6-phosphate kinase">
    <location>
        <begin position="1"/>
        <end position="309"/>
    </location>
</feature>
<evidence type="ECO:0000255" key="1">
    <source>
        <dbReference type="HAMAP-Rule" id="MF_01557"/>
    </source>
</evidence>
<protein>
    <recommendedName>
        <fullName evidence="1">Tagatose-6-phosphate kinase</fullName>
        <ecNumber evidence="1">2.7.1.144</ecNumber>
    </recommendedName>
    <alternativeName>
        <fullName evidence="1">Phosphotagatokinase</fullName>
    </alternativeName>
</protein>
<dbReference type="EC" id="2.7.1.144" evidence="1"/>
<dbReference type="EMBL" id="CP000921">
    <property type="protein sequence ID" value="ACO23011.1"/>
    <property type="molecule type" value="Genomic_DNA"/>
</dbReference>
<dbReference type="RefSeq" id="WP_000604294.1">
    <property type="nucleotide sequence ID" value="NC_012469.1"/>
</dbReference>
<dbReference type="SMR" id="C1CRA6"/>
<dbReference type="KEGG" id="snt:SPT_1035"/>
<dbReference type="HOGENOM" id="CLU_050013_5_0_9"/>
<dbReference type="UniPathway" id="UPA00704">
    <property type="reaction ID" value="UER00715"/>
</dbReference>
<dbReference type="GO" id="GO:0005829">
    <property type="term" value="C:cytosol"/>
    <property type="evidence" value="ECO:0007669"/>
    <property type="project" value="TreeGrafter"/>
</dbReference>
<dbReference type="GO" id="GO:0005524">
    <property type="term" value="F:ATP binding"/>
    <property type="evidence" value="ECO:0007669"/>
    <property type="project" value="UniProtKB-KW"/>
</dbReference>
<dbReference type="GO" id="GO:0008443">
    <property type="term" value="F:phosphofructokinase activity"/>
    <property type="evidence" value="ECO:0007669"/>
    <property type="project" value="TreeGrafter"/>
</dbReference>
<dbReference type="GO" id="GO:0009024">
    <property type="term" value="F:tagatose-6-phosphate kinase activity"/>
    <property type="evidence" value="ECO:0007669"/>
    <property type="project" value="UniProtKB-UniRule"/>
</dbReference>
<dbReference type="GO" id="GO:2001059">
    <property type="term" value="P:D-tagatose 6-phosphate catabolic process"/>
    <property type="evidence" value="ECO:0007669"/>
    <property type="project" value="UniProtKB-UniRule"/>
</dbReference>
<dbReference type="GO" id="GO:0019512">
    <property type="term" value="P:lactose catabolic process via tagatose-6-phosphate"/>
    <property type="evidence" value="ECO:0007669"/>
    <property type="project" value="InterPro"/>
</dbReference>
<dbReference type="CDD" id="cd01164">
    <property type="entry name" value="FruK_PfkB_like"/>
    <property type="match status" value="1"/>
</dbReference>
<dbReference type="FunFam" id="3.40.1190.20:FF:000001">
    <property type="entry name" value="Phosphofructokinase"/>
    <property type="match status" value="1"/>
</dbReference>
<dbReference type="Gene3D" id="3.40.1190.20">
    <property type="match status" value="1"/>
</dbReference>
<dbReference type="HAMAP" id="MF_01557">
    <property type="entry name" value="LacC"/>
    <property type="match status" value="1"/>
</dbReference>
<dbReference type="InterPro" id="IPR002173">
    <property type="entry name" value="Carboh/pur_kinase_PfkB_CS"/>
</dbReference>
<dbReference type="InterPro" id="IPR005926">
    <property type="entry name" value="LacC"/>
</dbReference>
<dbReference type="InterPro" id="IPR011611">
    <property type="entry name" value="PfkB_dom"/>
</dbReference>
<dbReference type="InterPro" id="IPR029056">
    <property type="entry name" value="Ribokinase-like"/>
</dbReference>
<dbReference type="InterPro" id="IPR017583">
    <property type="entry name" value="Tagatose/fructose_Pkinase"/>
</dbReference>
<dbReference type="NCBIfam" id="TIGR03168">
    <property type="entry name" value="1-PFK"/>
    <property type="match status" value="1"/>
</dbReference>
<dbReference type="NCBIfam" id="TIGR01231">
    <property type="entry name" value="lacC"/>
    <property type="match status" value="1"/>
</dbReference>
<dbReference type="NCBIfam" id="NF010033">
    <property type="entry name" value="PRK13508.1"/>
    <property type="match status" value="1"/>
</dbReference>
<dbReference type="PANTHER" id="PTHR46566:SF5">
    <property type="entry name" value="1-PHOSPHOFRUCTOKINASE"/>
    <property type="match status" value="1"/>
</dbReference>
<dbReference type="PANTHER" id="PTHR46566">
    <property type="entry name" value="1-PHOSPHOFRUCTOKINASE-RELATED"/>
    <property type="match status" value="1"/>
</dbReference>
<dbReference type="Pfam" id="PF00294">
    <property type="entry name" value="PfkB"/>
    <property type="match status" value="1"/>
</dbReference>
<dbReference type="PIRSF" id="PIRSF000535">
    <property type="entry name" value="1PFK/6PFK/LacC"/>
    <property type="match status" value="1"/>
</dbReference>
<dbReference type="SUPFAM" id="SSF53613">
    <property type="entry name" value="Ribokinase-like"/>
    <property type="match status" value="1"/>
</dbReference>
<dbReference type="PROSITE" id="PS00583">
    <property type="entry name" value="PFKB_KINASES_1"/>
    <property type="match status" value="1"/>
</dbReference>
<dbReference type="PROSITE" id="PS00584">
    <property type="entry name" value="PFKB_KINASES_2"/>
    <property type="match status" value="1"/>
</dbReference>
<name>LACC_STRZT</name>